<sequence length="425" mass="47558">MAPEPEDIKDEKNPRPLDEDDIALLKTYGLGPYSTHIKKAEKEVKDLAKKVNDLCGIKESDTGLAAPSQWDLVSDKQMMQEEQPLQVARCTKIINPNSEDAKYVINVKQIAKFVVGLGDKVSPTDIEEGMRVGVDRNKYQIQIPLPPKIDPSVTMMTVEEKPDVTYNDVGGCKEQIEKMREVVELPMLHPEKFVKLGIDPPKGVLCYGPPGTGKTLLARAVANRTDACFIRVIGSELVQKYVGEGARMVRELFQMARSKKACIVFFDEVDAIGGARFDDGVGGDNEVQRTMLEIVNQLDGFDARGNIKVLMATNRPDTLDPALLRPGRLDRKVEFGLPDLESRTQIFKIHTRTMNCERDIRFELLARLCPNSTGADIRSVCTEAGMYAIRARRKTVTEKDFLDAVNKVIKGYQKFSATPKYMVYN</sequence>
<gene>
    <name type="primary">RPT1</name>
    <name type="synonym">PS7</name>
</gene>
<protein>
    <recommendedName>
        <fullName>26S proteasome regulatory subunit 7</fullName>
    </recommendedName>
    <alternativeName>
        <fullName>26S proteasome AAA-ATPase subunit RPT1</fullName>
    </alternativeName>
    <alternativeName>
        <fullName>26S proteasome subunit 7</fullName>
    </alternativeName>
    <alternativeName>
        <fullName>Regulatory particle triple-A ATPase subunit 1</fullName>
    </alternativeName>
</protein>
<evidence type="ECO:0000250" key="1"/>
<evidence type="ECO:0000255" key="2"/>
<evidence type="ECO:0000305" key="3"/>
<reference key="1">
    <citation type="online journal article" date="1998" name="Plant Gene Register">
        <title>Cloning of a 26S proteasome subunit 7 homologue from peach.</title>
        <authorList>
            <person name="Bassett C.L."/>
            <person name="Artlip T.S."/>
            <person name="Nickerson M.L."/>
            <person name="Wilson C.W."/>
            <person name="Hixson C.V."/>
        </authorList>
        <locator>PGR98-082</locator>
    </citation>
    <scope>NUCLEOTIDE SEQUENCE [MRNA]</scope>
    <source>
        <tissue>Fruit</tissue>
    </source>
</reference>
<comment type="function">
    <text evidence="1">The 26S proteasome is involved in the ATP-dependent degradation of ubiquitinated proteins. The regulatory (or ATPase) complex confers ATP dependency and substrate specificity to the 26S complex (By similarity).</text>
</comment>
<comment type="subcellular location">
    <subcellularLocation>
        <location evidence="3">Cytoplasm</location>
    </subcellularLocation>
    <subcellularLocation>
        <location evidence="3">Nucleus</location>
    </subcellularLocation>
</comment>
<comment type="similarity">
    <text evidence="3">Belongs to the AAA ATPase family.</text>
</comment>
<name>PRS7_PRUPE</name>
<accession>O64982</accession>
<feature type="chain" id="PRO_0000084716" description="26S proteasome regulatory subunit 7">
    <location>
        <begin position="1"/>
        <end position="425"/>
    </location>
</feature>
<feature type="binding site" evidence="2">
    <location>
        <begin position="208"/>
        <end position="215"/>
    </location>
    <ligand>
        <name>ATP</name>
        <dbReference type="ChEBI" id="CHEBI:30616"/>
    </ligand>
</feature>
<keyword id="KW-0067">ATP-binding</keyword>
<keyword id="KW-0963">Cytoplasm</keyword>
<keyword id="KW-0547">Nucleotide-binding</keyword>
<keyword id="KW-0539">Nucleus</keyword>
<keyword id="KW-0647">Proteasome</keyword>
<dbReference type="EMBL" id="AF041258">
    <property type="protein sequence ID" value="AAC18523.1"/>
    <property type="molecule type" value="mRNA"/>
</dbReference>
<dbReference type="RefSeq" id="XP_007215431.1">
    <property type="nucleotide sequence ID" value="XM_007215369.1"/>
</dbReference>
<dbReference type="SMR" id="O64982"/>
<dbReference type="EnsemblPlants" id="ONI15199">
    <property type="protein sequence ID" value="ONI15199"/>
    <property type="gene ID" value="PRUPE_3G030100"/>
</dbReference>
<dbReference type="GeneID" id="18783658"/>
<dbReference type="Gramene" id="ONI15199">
    <property type="protein sequence ID" value="ONI15199"/>
    <property type="gene ID" value="PRUPE_3G030100"/>
</dbReference>
<dbReference type="KEGG" id="pper:18783658"/>
<dbReference type="eggNOG" id="KOG0729">
    <property type="taxonomic scope" value="Eukaryota"/>
</dbReference>
<dbReference type="HOGENOM" id="CLU_000688_6_1_1"/>
<dbReference type="OMA" id="TEAGMYC"/>
<dbReference type="OrthoDB" id="1937997at2759"/>
<dbReference type="PhylomeDB" id="O64982"/>
<dbReference type="GO" id="GO:0005737">
    <property type="term" value="C:cytoplasm"/>
    <property type="evidence" value="ECO:0007669"/>
    <property type="project" value="UniProtKB-SubCell"/>
</dbReference>
<dbReference type="GO" id="GO:0005634">
    <property type="term" value="C:nucleus"/>
    <property type="evidence" value="ECO:0007669"/>
    <property type="project" value="UniProtKB-SubCell"/>
</dbReference>
<dbReference type="GO" id="GO:0000502">
    <property type="term" value="C:proteasome complex"/>
    <property type="evidence" value="ECO:0007669"/>
    <property type="project" value="UniProtKB-KW"/>
</dbReference>
<dbReference type="GO" id="GO:0005524">
    <property type="term" value="F:ATP binding"/>
    <property type="evidence" value="ECO:0007669"/>
    <property type="project" value="UniProtKB-KW"/>
</dbReference>
<dbReference type="GO" id="GO:0016887">
    <property type="term" value="F:ATP hydrolysis activity"/>
    <property type="evidence" value="ECO:0007669"/>
    <property type="project" value="InterPro"/>
</dbReference>
<dbReference type="CDD" id="cd19502">
    <property type="entry name" value="RecA-like_PAN_like"/>
    <property type="match status" value="1"/>
</dbReference>
<dbReference type="FunFam" id="1.10.8.60:FF:000005">
    <property type="entry name" value="26S protease regulatory subunit 7"/>
    <property type="match status" value="1"/>
</dbReference>
<dbReference type="FunFam" id="2.40.50.140:FF:000037">
    <property type="entry name" value="26S protease regulatory subunit 7"/>
    <property type="match status" value="1"/>
</dbReference>
<dbReference type="FunFam" id="3.40.50.300:FF:000027">
    <property type="entry name" value="26S protease regulatory subunit 7"/>
    <property type="match status" value="1"/>
</dbReference>
<dbReference type="Gene3D" id="1.10.8.60">
    <property type="match status" value="1"/>
</dbReference>
<dbReference type="Gene3D" id="2.40.50.140">
    <property type="entry name" value="Nucleic acid-binding proteins"/>
    <property type="match status" value="1"/>
</dbReference>
<dbReference type="Gene3D" id="3.40.50.300">
    <property type="entry name" value="P-loop containing nucleotide triphosphate hydrolases"/>
    <property type="match status" value="1"/>
</dbReference>
<dbReference type="InterPro" id="IPR050221">
    <property type="entry name" value="26S_Proteasome_ATPase"/>
</dbReference>
<dbReference type="InterPro" id="IPR003593">
    <property type="entry name" value="AAA+_ATPase"/>
</dbReference>
<dbReference type="InterPro" id="IPR041569">
    <property type="entry name" value="AAA_lid_3"/>
</dbReference>
<dbReference type="InterPro" id="IPR003959">
    <property type="entry name" value="ATPase_AAA_core"/>
</dbReference>
<dbReference type="InterPro" id="IPR003960">
    <property type="entry name" value="ATPase_AAA_CS"/>
</dbReference>
<dbReference type="InterPro" id="IPR012340">
    <property type="entry name" value="NA-bd_OB-fold"/>
</dbReference>
<dbReference type="InterPro" id="IPR027417">
    <property type="entry name" value="P-loop_NTPase"/>
</dbReference>
<dbReference type="InterPro" id="IPR048723">
    <property type="entry name" value="PRS7-like_OB"/>
</dbReference>
<dbReference type="PANTHER" id="PTHR23073">
    <property type="entry name" value="26S PROTEASOME REGULATORY SUBUNIT"/>
    <property type="match status" value="1"/>
</dbReference>
<dbReference type="Pfam" id="PF00004">
    <property type="entry name" value="AAA"/>
    <property type="match status" value="1"/>
</dbReference>
<dbReference type="Pfam" id="PF17862">
    <property type="entry name" value="AAA_lid_3"/>
    <property type="match status" value="1"/>
</dbReference>
<dbReference type="Pfam" id="PF21236">
    <property type="entry name" value="PRS7_OB"/>
    <property type="match status" value="1"/>
</dbReference>
<dbReference type="SMART" id="SM00382">
    <property type="entry name" value="AAA"/>
    <property type="match status" value="1"/>
</dbReference>
<dbReference type="SUPFAM" id="SSF52540">
    <property type="entry name" value="P-loop containing nucleoside triphosphate hydrolases"/>
    <property type="match status" value="1"/>
</dbReference>
<dbReference type="PROSITE" id="PS00674">
    <property type="entry name" value="AAA"/>
    <property type="match status" value="1"/>
</dbReference>
<proteinExistence type="evidence at transcript level"/>
<organism>
    <name type="scientific">Prunus persica</name>
    <name type="common">Peach</name>
    <name type="synonym">Amygdalus persica</name>
    <dbReference type="NCBI Taxonomy" id="3760"/>
    <lineage>
        <taxon>Eukaryota</taxon>
        <taxon>Viridiplantae</taxon>
        <taxon>Streptophyta</taxon>
        <taxon>Embryophyta</taxon>
        <taxon>Tracheophyta</taxon>
        <taxon>Spermatophyta</taxon>
        <taxon>Magnoliopsida</taxon>
        <taxon>eudicotyledons</taxon>
        <taxon>Gunneridae</taxon>
        <taxon>Pentapetalae</taxon>
        <taxon>rosids</taxon>
        <taxon>fabids</taxon>
        <taxon>Rosales</taxon>
        <taxon>Rosaceae</taxon>
        <taxon>Amygdaloideae</taxon>
        <taxon>Amygdaleae</taxon>
        <taxon>Prunus</taxon>
    </lineage>
</organism>